<proteinExistence type="inferred from homology"/>
<evidence type="ECO:0000255" key="1">
    <source>
        <dbReference type="HAMAP-Rule" id="MF_01554"/>
    </source>
</evidence>
<keyword id="KW-0413">Isomerase</keyword>
<keyword id="KW-0460">Magnesium</keyword>
<keyword id="KW-0479">Metal-binding</keyword>
<keyword id="KW-0597">Phosphoprotein</keyword>
<comment type="function">
    <text evidence="1">Catalyzes the conversion of glucosamine-6-phosphate to glucosamine-1-phosphate.</text>
</comment>
<comment type="catalytic activity">
    <reaction evidence="1">
        <text>alpha-D-glucosamine 1-phosphate = D-glucosamine 6-phosphate</text>
        <dbReference type="Rhea" id="RHEA:23424"/>
        <dbReference type="ChEBI" id="CHEBI:58516"/>
        <dbReference type="ChEBI" id="CHEBI:58725"/>
        <dbReference type="EC" id="5.4.2.10"/>
    </reaction>
</comment>
<comment type="cofactor">
    <cofactor evidence="1">
        <name>Mg(2+)</name>
        <dbReference type="ChEBI" id="CHEBI:18420"/>
    </cofactor>
    <text evidence="1">Binds 1 Mg(2+) ion per subunit.</text>
</comment>
<comment type="PTM">
    <text evidence="1">Activated by phosphorylation.</text>
</comment>
<comment type="similarity">
    <text evidence="1">Belongs to the phosphohexose mutase family.</text>
</comment>
<feature type="chain" id="PRO_0000343591" description="Phosphoglucosamine mutase">
    <location>
        <begin position="1"/>
        <end position="448"/>
    </location>
</feature>
<feature type="active site" description="Phosphoserine intermediate" evidence="1">
    <location>
        <position position="99"/>
    </location>
</feature>
<feature type="binding site" description="via phosphate group" evidence="1">
    <location>
        <position position="99"/>
    </location>
    <ligand>
        <name>Mg(2+)</name>
        <dbReference type="ChEBI" id="CHEBI:18420"/>
    </ligand>
</feature>
<feature type="binding site" evidence="1">
    <location>
        <position position="238"/>
    </location>
    <ligand>
        <name>Mg(2+)</name>
        <dbReference type="ChEBI" id="CHEBI:18420"/>
    </ligand>
</feature>
<feature type="binding site" evidence="1">
    <location>
        <position position="240"/>
    </location>
    <ligand>
        <name>Mg(2+)</name>
        <dbReference type="ChEBI" id="CHEBI:18420"/>
    </ligand>
</feature>
<feature type="binding site" evidence="1">
    <location>
        <position position="242"/>
    </location>
    <ligand>
        <name>Mg(2+)</name>
        <dbReference type="ChEBI" id="CHEBI:18420"/>
    </ligand>
</feature>
<feature type="modified residue" description="Phosphoserine" evidence="1">
    <location>
        <position position="99"/>
    </location>
</feature>
<dbReference type="EC" id="5.4.2.10" evidence="1"/>
<dbReference type="EMBL" id="CP000749">
    <property type="protein sequence ID" value="ABR69953.1"/>
    <property type="molecule type" value="Genomic_DNA"/>
</dbReference>
<dbReference type="SMR" id="A6VU24"/>
<dbReference type="STRING" id="400668.Mmwyl1_1022"/>
<dbReference type="KEGG" id="mmw:Mmwyl1_1022"/>
<dbReference type="eggNOG" id="COG1109">
    <property type="taxonomic scope" value="Bacteria"/>
</dbReference>
<dbReference type="HOGENOM" id="CLU_016950_7_0_6"/>
<dbReference type="OrthoDB" id="9803322at2"/>
<dbReference type="GO" id="GO:0005829">
    <property type="term" value="C:cytosol"/>
    <property type="evidence" value="ECO:0007669"/>
    <property type="project" value="TreeGrafter"/>
</dbReference>
<dbReference type="GO" id="GO:0000287">
    <property type="term" value="F:magnesium ion binding"/>
    <property type="evidence" value="ECO:0007669"/>
    <property type="project" value="UniProtKB-UniRule"/>
</dbReference>
<dbReference type="GO" id="GO:0008966">
    <property type="term" value="F:phosphoglucosamine mutase activity"/>
    <property type="evidence" value="ECO:0007669"/>
    <property type="project" value="UniProtKB-UniRule"/>
</dbReference>
<dbReference type="GO" id="GO:0004615">
    <property type="term" value="F:phosphomannomutase activity"/>
    <property type="evidence" value="ECO:0007669"/>
    <property type="project" value="TreeGrafter"/>
</dbReference>
<dbReference type="GO" id="GO:0005975">
    <property type="term" value="P:carbohydrate metabolic process"/>
    <property type="evidence" value="ECO:0007669"/>
    <property type="project" value="InterPro"/>
</dbReference>
<dbReference type="GO" id="GO:0009252">
    <property type="term" value="P:peptidoglycan biosynthetic process"/>
    <property type="evidence" value="ECO:0007669"/>
    <property type="project" value="TreeGrafter"/>
</dbReference>
<dbReference type="GO" id="GO:0006048">
    <property type="term" value="P:UDP-N-acetylglucosamine biosynthetic process"/>
    <property type="evidence" value="ECO:0007669"/>
    <property type="project" value="TreeGrafter"/>
</dbReference>
<dbReference type="CDD" id="cd05802">
    <property type="entry name" value="GlmM"/>
    <property type="match status" value="1"/>
</dbReference>
<dbReference type="FunFam" id="3.30.310.50:FF:000001">
    <property type="entry name" value="Phosphoglucosamine mutase"/>
    <property type="match status" value="1"/>
</dbReference>
<dbReference type="FunFam" id="3.40.120.10:FF:000001">
    <property type="entry name" value="Phosphoglucosamine mutase"/>
    <property type="match status" value="1"/>
</dbReference>
<dbReference type="FunFam" id="3.40.120.10:FF:000003">
    <property type="entry name" value="Phosphoglucosamine mutase"/>
    <property type="match status" value="1"/>
</dbReference>
<dbReference type="Gene3D" id="3.40.120.10">
    <property type="entry name" value="Alpha-D-Glucose-1,6-Bisphosphate, subunit A, domain 3"/>
    <property type="match status" value="3"/>
</dbReference>
<dbReference type="Gene3D" id="3.30.310.50">
    <property type="entry name" value="Alpha-D-phosphohexomutase, C-terminal domain"/>
    <property type="match status" value="1"/>
</dbReference>
<dbReference type="HAMAP" id="MF_01554_B">
    <property type="entry name" value="GlmM_B"/>
    <property type="match status" value="1"/>
</dbReference>
<dbReference type="InterPro" id="IPR005844">
    <property type="entry name" value="A-D-PHexomutase_a/b/a-I"/>
</dbReference>
<dbReference type="InterPro" id="IPR016055">
    <property type="entry name" value="A-D-PHexomutase_a/b/a-I/II/III"/>
</dbReference>
<dbReference type="InterPro" id="IPR005845">
    <property type="entry name" value="A-D-PHexomutase_a/b/a-II"/>
</dbReference>
<dbReference type="InterPro" id="IPR005846">
    <property type="entry name" value="A-D-PHexomutase_a/b/a-III"/>
</dbReference>
<dbReference type="InterPro" id="IPR005843">
    <property type="entry name" value="A-D-PHexomutase_C"/>
</dbReference>
<dbReference type="InterPro" id="IPR036900">
    <property type="entry name" value="A-D-PHexomutase_C_sf"/>
</dbReference>
<dbReference type="InterPro" id="IPR016066">
    <property type="entry name" value="A-D-PHexomutase_CS"/>
</dbReference>
<dbReference type="InterPro" id="IPR005841">
    <property type="entry name" value="Alpha-D-phosphohexomutase_SF"/>
</dbReference>
<dbReference type="InterPro" id="IPR006352">
    <property type="entry name" value="GlmM_bact"/>
</dbReference>
<dbReference type="InterPro" id="IPR050060">
    <property type="entry name" value="Phosphoglucosamine_mutase"/>
</dbReference>
<dbReference type="NCBIfam" id="TIGR01455">
    <property type="entry name" value="glmM"/>
    <property type="match status" value="1"/>
</dbReference>
<dbReference type="NCBIfam" id="NF008139">
    <property type="entry name" value="PRK10887.1"/>
    <property type="match status" value="1"/>
</dbReference>
<dbReference type="PANTHER" id="PTHR42946:SF1">
    <property type="entry name" value="PHOSPHOGLUCOMUTASE (ALPHA-D-GLUCOSE-1,6-BISPHOSPHATE-DEPENDENT)"/>
    <property type="match status" value="1"/>
</dbReference>
<dbReference type="PANTHER" id="PTHR42946">
    <property type="entry name" value="PHOSPHOHEXOSE MUTASE"/>
    <property type="match status" value="1"/>
</dbReference>
<dbReference type="Pfam" id="PF02878">
    <property type="entry name" value="PGM_PMM_I"/>
    <property type="match status" value="1"/>
</dbReference>
<dbReference type="Pfam" id="PF02879">
    <property type="entry name" value="PGM_PMM_II"/>
    <property type="match status" value="1"/>
</dbReference>
<dbReference type="Pfam" id="PF02880">
    <property type="entry name" value="PGM_PMM_III"/>
    <property type="match status" value="1"/>
</dbReference>
<dbReference type="Pfam" id="PF00408">
    <property type="entry name" value="PGM_PMM_IV"/>
    <property type="match status" value="1"/>
</dbReference>
<dbReference type="PRINTS" id="PR00509">
    <property type="entry name" value="PGMPMM"/>
</dbReference>
<dbReference type="SUPFAM" id="SSF55957">
    <property type="entry name" value="Phosphoglucomutase, C-terminal domain"/>
    <property type="match status" value="1"/>
</dbReference>
<dbReference type="SUPFAM" id="SSF53738">
    <property type="entry name" value="Phosphoglucomutase, first 3 domains"/>
    <property type="match status" value="3"/>
</dbReference>
<dbReference type="PROSITE" id="PS00710">
    <property type="entry name" value="PGM_PMM"/>
    <property type="match status" value="1"/>
</dbReference>
<reference key="1">
    <citation type="submission" date="2007-06" db="EMBL/GenBank/DDBJ databases">
        <title>Complete sequence of Marinomonas sp. MWYL1.</title>
        <authorList>
            <consortium name="US DOE Joint Genome Institute"/>
            <person name="Copeland A."/>
            <person name="Lucas S."/>
            <person name="Lapidus A."/>
            <person name="Barry K."/>
            <person name="Glavina del Rio T."/>
            <person name="Dalin E."/>
            <person name="Tice H."/>
            <person name="Pitluck S."/>
            <person name="Kiss H."/>
            <person name="Brettin T."/>
            <person name="Bruce D."/>
            <person name="Detter J.C."/>
            <person name="Han C."/>
            <person name="Schmutz J."/>
            <person name="Larimer F."/>
            <person name="Land M."/>
            <person name="Hauser L."/>
            <person name="Kyrpides N."/>
            <person name="Kim E."/>
            <person name="Johnston A.W.B."/>
            <person name="Todd J.D."/>
            <person name="Rogers R."/>
            <person name="Wexler M."/>
            <person name="Bond P.L."/>
            <person name="Li Y."/>
            <person name="Richardson P."/>
        </authorList>
    </citation>
    <scope>NUCLEOTIDE SEQUENCE [LARGE SCALE GENOMIC DNA]</scope>
    <source>
        <strain>MWYL1</strain>
    </source>
</reference>
<name>GLMM_MARMS</name>
<gene>
    <name evidence="1" type="primary">glmM</name>
    <name type="ordered locus">Mmwyl1_1022</name>
</gene>
<accession>A6VU24</accession>
<organism>
    <name type="scientific">Marinomonas sp. (strain MWYL1)</name>
    <dbReference type="NCBI Taxonomy" id="400668"/>
    <lineage>
        <taxon>Bacteria</taxon>
        <taxon>Pseudomonadati</taxon>
        <taxon>Pseudomonadota</taxon>
        <taxon>Gammaproteobacteria</taxon>
        <taxon>Oceanospirillales</taxon>
        <taxon>Oceanospirillaceae</taxon>
        <taxon>Marinomonas</taxon>
    </lineage>
</organism>
<sequence>MRKYFGTDGIRGKVGTTPITPEFMLKLGWAAGQVFKENDKKILIGKDTRISGYMFESALESGIVAAGADVRLVGPMPTPAIAYLTRTFRASAGIVISASHNPYTDNGIKFFSAEGGKISDELEERIEYFLEQPMEVVESSQIGRAKRIDDAAGRYIEYCKGTFPIGLQLSGLKIVVDCADGATYHVAPRVFSELGAEVISIGVNPDGLNINEFSGATKPELLRKNVLAEEADLGIALDGDGDRLILVDRHGVVRDGDDILYIIANHLMRTGRFSGGVVGTLMSNFGLELAFSETGIGFSRAAVGDRYVNEKLMQHGWVLGGEPSGHIVCRSITTTGDGIIAALQVLRAMVEEGKALDELLVGLVKFPQKLKNIRVAKRFVPNEEPTLQKAIAVANERLNGLGRVLLRASGTEPLIRVMVEGRDNDTVDELVEYLVEEVNSVVSAKADT</sequence>
<protein>
    <recommendedName>
        <fullName evidence="1">Phosphoglucosamine mutase</fullName>
        <ecNumber evidence="1">5.4.2.10</ecNumber>
    </recommendedName>
</protein>